<proteinExistence type="evidence at protein level"/>
<reference key="1">
    <citation type="journal article" date="2013" name="Biochem. Biophys. Res. Commun.">
        <title>Isolation and characterization of a cDNA encoding (S)-cis-N-methylstylopine 14-hydroxylase from opium poppy, a key enzyme in sanguinarine biosynthesis.</title>
        <authorList>
            <person name="Beaudoin G.A.W."/>
            <person name="Facchini P.J."/>
        </authorList>
    </citation>
    <scope>NUCLEOTIDE SEQUENCE [MRNA]</scope>
    <scope>FUNCTION</scope>
    <scope>PATHWAY</scope>
    <scope>CATALYTIC ACTIVITY</scope>
    <scope>TISSUE SPECIFICITY</scope>
    <scope>INDUCTION BY ELICITOR</scope>
</reference>
<reference key="2">
    <citation type="journal article" date="1987" name="Tetrahedron Lett.">
        <title>Enzymatic formation of protopines by a microsomal cytochrome P-450 system of Corydalis vaginans.</title>
        <authorList>
            <person name="Rueffer M."/>
            <person name="Zenk M.H."/>
        </authorList>
    </citation>
    <scope>FUNCTION</scope>
    <scope>CATALYTIC ACTIVITY</scope>
    <scope>PATHWAY</scope>
    <scope>BIOPHYSICOCHEMICAL PROPERTIES</scope>
    <scope>ACTIVITY REGULATION</scope>
</reference>
<organism>
    <name type="scientific">Papaver somniferum</name>
    <name type="common">Opium poppy</name>
    <dbReference type="NCBI Taxonomy" id="3469"/>
    <lineage>
        <taxon>Eukaryota</taxon>
        <taxon>Viridiplantae</taxon>
        <taxon>Streptophyta</taxon>
        <taxon>Embryophyta</taxon>
        <taxon>Tracheophyta</taxon>
        <taxon>Spermatophyta</taxon>
        <taxon>Magnoliopsida</taxon>
        <taxon>Ranunculales</taxon>
        <taxon>Papaveraceae</taxon>
        <taxon>Papaveroideae</taxon>
        <taxon>Papaver</taxon>
    </lineage>
</organism>
<feature type="chain" id="PRO_0000430260" description="Methyltetrahydroprotoberberine 14-monooxygenase">
    <location>
        <begin position="1"/>
        <end position="526"/>
    </location>
</feature>
<feature type="transmembrane region" description="Helical" evidence="2">
    <location>
        <begin position="14"/>
        <end position="34"/>
    </location>
</feature>
<feature type="binding site" description="axial binding residue" evidence="1">
    <location>
        <position position="468"/>
    </location>
    <ligand>
        <name>heme</name>
        <dbReference type="ChEBI" id="CHEBI:30413"/>
    </ligand>
    <ligandPart>
        <name>Fe</name>
        <dbReference type="ChEBI" id="CHEBI:18248"/>
    </ligandPart>
</feature>
<protein>
    <recommendedName>
        <fullName evidence="5">Methyltetrahydroprotoberberine 14-monooxygenase</fullName>
        <ecNumber evidence="3 4">1.14.14.97</ecNumber>
    </recommendedName>
    <alternativeName>
        <fullName evidence="5">(S)-cis-N-methylstylopine 14-hydroxylase</fullName>
    </alternativeName>
    <alternativeName>
        <fullName evidence="5 6">(S)-cis-N-methyltetrahydroprotoberberine-14-hydroxylase</fullName>
    </alternativeName>
    <alternativeName>
        <fullName evidence="5">Cytochrome P450 82N4</fullName>
    </alternativeName>
    <alternativeName>
        <fullName evidence="5">Methyltetrahydroprotoberberine 14-hydroxylase</fullName>
    </alternativeName>
    <alternativeName>
        <fullName evidence="5">N-methylstylopine hydroxylase</fullName>
        <shortName evidence="5">PsMSH</shortName>
    </alternativeName>
</protein>
<keyword id="KW-0349">Heme</keyword>
<keyword id="KW-0408">Iron</keyword>
<keyword id="KW-0472">Membrane</keyword>
<keyword id="KW-0479">Metal-binding</keyword>
<keyword id="KW-0503">Monooxygenase</keyword>
<keyword id="KW-0560">Oxidoreductase</keyword>
<keyword id="KW-0812">Transmembrane</keyword>
<keyword id="KW-1133">Transmembrane helix</keyword>
<dbReference type="EC" id="1.14.14.97" evidence="3 4"/>
<dbReference type="EMBL" id="KC154003">
    <property type="protein sequence ID" value="AGC92398.1"/>
    <property type="molecule type" value="mRNA"/>
</dbReference>
<dbReference type="SMR" id="L7X3S1"/>
<dbReference type="KEGG" id="ag:AGC92398"/>
<dbReference type="BioCyc" id="MetaCyc:MONOMER-18686"/>
<dbReference type="GO" id="GO:0016020">
    <property type="term" value="C:membrane"/>
    <property type="evidence" value="ECO:0007669"/>
    <property type="project" value="UniProtKB-SubCell"/>
</dbReference>
<dbReference type="GO" id="GO:0020037">
    <property type="term" value="F:heme binding"/>
    <property type="evidence" value="ECO:0007669"/>
    <property type="project" value="InterPro"/>
</dbReference>
<dbReference type="GO" id="GO:0005506">
    <property type="term" value="F:iron ion binding"/>
    <property type="evidence" value="ECO:0007669"/>
    <property type="project" value="InterPro"/>
</dbReference>
<dbReference type="GO" id="GO:0047084">
    <property type="term" value="F:methyltetrahydroprotoberberine 14-monooxygenase activity"/>
    <property type="evidence" value="ECO:0000314"/>
    <property type="project" value="UniProtKB"/>
</dbReference>
<dbReference type="GO" id="GO:0033075">
    <property type="term" value="P:isoquinoline alkaloid biosynthetic process"/>
    <property type="evidence" value="ECO:0000314"/>
    <property type="project" value="UniProtKB"/>
</dbReference>
<dbReference type="CDD" id="cd20654">
    <property type="entry name" value="CYP82"/>
    <property type="match status" value="1"/>
</dbReference>
<dbReference type="FunFam" id="1.10.630.10:FF:000026">
    <property type="entry name" value="Cytochrome P450 82C4"/>
    <property type="match status" value="1"/>
</dbReference>
<dbReference type="Gene3D" id="1.10.630.10">
    <property type="entry name" value="Cytochrome P450"/>
    <property type="match status" value="1"/>
</dbReference>
<dbReference type="InterPro" id="IPR001128">
    <property type="entry name" value="Cyt_P450"/>
</dbReference>
<dbReference type="InterPro" id="IPR017972">
    <property type="entry name" value="Cyt_P450_CS"/>
</dbReference>
<dbReference type="InterPro" id="IPR002401">
    <property type="entry name" value="Cyt_P450_E_grp-I"/>
</dbReference>
<dbReference type="InterPro" id="IPR036396">
    <property type="entry name" value="Cyt_P450_sf"/>
</dbReference>
<dbReference type="InterPro" id="IPR050651">
    <property type="entry name" value="Plant_Cytochrome_P450_Monoox"/>
</dbReference>
<dbReference type="PANTHER" id="PTHR47947:SF26">
    <property type="entry name" value="CYTOCHROME P450"/>
    <property type="match status" value="1"/>
</dbReference>
<dbReference type="PANTHER" id="PTHR47947">
    <property type="entry name" value="CYTOCHROME P450 82C3-RELATED"/>
    <property type="match status" value="1"/>
</dbReference>
<dbReference type="Pfam" id="PF00067">
    <property type="entry name" value="p450"/>
    <property type="match status" value="1"/>
</dbReference>
<dbReference type="PRINTS" id="PR00463">
    <property type="entry name" value="EP450I"/>
</dbReference>
<dbReference type="PRINTS" id="PR00385">
    <property type="entry name" value="P450"/>
</dbReference>
<dbReference type="SUPFAM" id="SSF48264">
    <property type="entry name" value="Cytochrome P450"/>
    <property type="match status" value="1"/>
</dbReference>
<dbReference type="PROSITE" id="PS00086">
    <property type="entry name" value="CYTOCHROME_P450"/>
    <property type="match status" value="1"/>
</dbReference>
<gene>
    <name evidence="5" type="primary">CYP82N4</name>
</gene>
<gene>
    <name evidence="5" type="primary">MSH</name>
</gene>
<name>MSH_PAPSO</name>
<evidence type="ECO:0000250" key="1">
    <source>
        <dbReference type="UniProtKB" id="Q96242"/>
    </source>
</evidence>
<evidence type="ECO:0000255" key="2"/>
<evidence type="ECO:0000269" key="3">
    <source>
    </source>
</evidence>
<evidence type="ECO:0000269" key="4">
    <source ref="2"/>
</evidence>
<evidence type="ECO:0000303" key="5">
    <source>
    </source>
</evidence>
<evidence type="ECO:0000303" key="6">
    <source ref="2"/>
</evidence>
<evidence type="ECO:0000305" key="7"/>
<comment type="function">
    <text evidence="3 4">Involved in the biosynthesis of the isoquinoline alkaloid sanguinarine (PubMed:23313486, Ref.2). Catalyzes the conversion of N-methylated protoberberine alkaloids N-methylstylopine and N-methylcanadine into protopine and allocryptopine, respectively (PubMed:23313486, Ref.2). Can also use (S)-cis-N-methyltetrahydrothalifendine and (S)-cis-N-methyltetrahydropalmatine as substrates (Ref.2).</text>
</comment>
<comment type="catalytic activity">
    <reaction evidence="3 4">
        <text>(S)-cis-N-methylcanadine + reduced [NADPH--hemoprotein reductase] + O2 = allocryptopine + oxidized [NADPH--hemoprotein reductase] + H2O + 2 H(+)</text>
        <dbReference type="Rhea" id="RHEA:23684"/>
        <dbReference type="Rhea" id="RHEA-COMP:11964"/>
        <dbReference type="Rhea" id="RHEA-COMP:11965"/>
        <dbReference type="ChEBI" id="CHEBI:15377"/>
        <dbReference type="ChEBI" id="CHEBI:15378"/>
        <dbReference type="ChEBI" id="CHEBI:15379"/>
        <dbReference type="ChEBI" id="CHEBI:17390"/>
        <dbReference type="ChEBI" id="CHEBI:50540"/>
        <dbReference type="ChEBI" id="CHEBI:57618"/>
        <dbReference type="ChEBI" id="CHEBI:58210"/>
        <dbReference type="EC" id="1.14.14.97"/>
    </reaction>
</comment>
<comment type="catalytic activity">
    <reaction evidence="3 4">
        <text>(S)-cis-N-methylstylopine + reduced [NADPH--hemoprotein reductase] + O2 = protopine + oxidized [NADPH--hemoprotein reductase] + H2O + 2 H(+)</text>
        <dbReference type="Rhea" id="RHEA:76035"/>
        <dbReference type="Rhea" id="RHEA-COMP:11964"/>
        <dbReference type="Rhea" id="RHEA-COMP:11965"/>
        <dbReference type="ChEBI" id="CHEBI:444"/>
        <dbReference type="ChEBI" id="CHEBI:15377"/>
        <dbReference type="ChEBI" id="CHEBI:15378"/>
        <dbReference type="ChEBI" id="CHEBI:15379"/>
        <dbReference type="ChEBI" id="CHEBI:16415"/>
        <dbReference type="ChEBI" id="CHEBI:57618"/>
        <dbReference type="ChEBI" id="CHEBI:58210"/>
        <dbReference type="EC" id="1.14.14.97"/>
    </reaction>
</comment>
<comment type="catalytic activity">
    <reaction evidence="4">
        <text>(S)-cis-N-methyltetrahydrothalifendine + reduced [NADPH--hemoprotein reductase] + O2 = 7-hydroxy-8-methoxy-11-methyl-17,19-dioxa-11-azatetracyclo[12.7.0.0(4,9).0(16,20)]henicosa-1(21),4(9),5,7,14,16(20)-hexaen-2-one + oxidized [NADPH--hemoprotein reductase] + H2O + 2 H(+)</text>
        <dbReference type="Rhea" id="RHEA:76039"/>
        <dbReference type="Rhea" id="RHEA-COMP:11964"/>
        <dbReference type="Rhea" id="RHEA-COMP:11965"/>
        <dbReference type="ChEBI" id="CHEBI:15377"/>
        <dbReference type="ChEBI" id="CHEBI:15378"/>
        <dbReference type="ChEBI" id="CHEBI:15379"/>
        <dbReference type="ChEBI" id="CHEBI:57618"/>
        <dbReference type="ChEBI" id="CHEBI:58210"/>
        <dbReference type="ChEBI" id="CHEBI:194521"/>
        <dbReference type="ChEBI" id="CHEBI:194522"/>
        <dbReference type="EC" id="1.14.14.97"/>
    </reaction>
</comment>
<comment type="catalytic activity">
    <reaction evidence="4">
        <text>(S)-cis-N-methyltetrahydropalmatine + reduced [NADPH--hemoprotein reductase] + O2 = muramine + oxidized [NADPH--hemoprotein reductase] + H2O + 2 H(+)</text>
        <dbReference type="Rhea" id="RHEA:76043"/>
        <dbReference type="Rhea" id="RHEA-COMP:11964"/>
        <dbReference type="Rhea" id="RHEA-COMP:11965"/>
        <dbReference type="ChEBI" id="CHEBI:15377"/>
        <dbReference type="ChEBI" id="CHEBI:15378"/>
        <dbReference type="ChEBI" id="CHEBI:15379"/>
        <dbReference type="ChEBI" id="CHEBI:57618"/>
        <dbReference type="ChEBI" id="CHEBI:58210"/>
        <dbReference type="ChEBI" id="CHEBI:194514"/>
        <dbReference type="ChEBI" id="CHEBI:194523"/>
        <dbReference type="EC" id="1.14.14.97"/>
    </reaction>
</comment>
<comment type="cofactor">
    <cofactor evidence="1">
        <name>heme</name>
        <dbReference type="ChEBI" id="CHEBI:30413"/>
    </cofactor>
</comment>
<comment type="activity regulation">
    <text evidence="4">Repressed by cytochrome P450 inhibitors ketoconazole, metyrapone, prochloraz, ancymidol and cytochrome C.</text>
</comment>
<comment type="biophysicochemical properties">
    <kinetics>
        <KM evidence="4">12.5 uM for cis-N-methylcanadine</KM>
        <KM evidence="4">62.5 uM for NADPH</KM>
    </kinetics>
    <phDependence>
        <text evidence="4">Optimum pH is 8.5.</text>
    </phDependence>
    <temperatureDependence>
        <text evidence="4">Optimum temperature is 30 degrees Celsius.</text>
    </temperatureDependence>
</comment>
<comment type="pathway">
    <text evidence="3 4">Alkaloid biosynthesis.</text>
</comment>
<comment type="subcellular location">
    <subcellularLocation>
        <location evidence="2">Membrane</location>
        <topology evidence="2">Single-pass membrane protein</topology>
    </subcellularLocation>
</comment>
<comment type="tissue specificity">
    <text evidence="3">Mainly expressed in roots, and barely in stems, leaves and carpels.</text>
</comment>
<comment type="induction">
    <text evidence="3">Induced by elicitor.</text>
</comment>
<comment type="similarity">
    <text evidence="7">Belongs to the cytochrome P450 family.</text>
</comment>
<accession>L7X3S1</accession>
<sequence>MRTESIKTNRPMDLLLQYLQPISVALVVIALVWNYGRRNPTKKLAPEASGGRPIMGHLHLFNDGELTHRKLGAMADTYGPVFNIRFGSHKTLVVSDWEIVKECFTTNDKLFSNRPGTLGIKLMFYDADSVGYAPYGAYWRDLRKISTLKLLSNHRIDTIKHLRSSEVESCFESLYSQWGNGEKSGEFAPVRMDSWLGDLTFNVVARIVAGKKNFSANGDVGAQRYKAAMDEAMRLMRFFAFSDVIPSLSWLDNLRGLVREMKKCASEIDSIMATWVEEHRVKRNSGGNSQLEHDFIDVCLDIMEHSSLPGDDPDLVVKSTCLDMILGGSDTTTVTLTWAMSLLLNHPQVLQKAKEELETQVGKNRQVDDSDIPNLPFIQAIIKETMRLYPAGPLIERRTMEDCEVAGYQVPAGTRLLVNVWKMQRDGNVYKGDPLEFRPDRFLTSNADVDLKGQHYELIPFGAGRRICPGVSFAVQLMHLVLARLLHEFEITTVEPETKVDMAESGGLLCYKIMPLEVLIKPRLEI</sequence>